<protein>
    <recommendedName>
        <fullName>Genome polyprotein</fullName>
    </recommendedName>
    <component>
        <recommendedName>
            <fullName>Capsid protein C</fullName>
        </recommendedName>
        <alternativeName>
            <fullName>Core protein</fullName>
        </alternativeName>
    </component>
    <component>
        <recommendedName>
            <fullName>Protein prM</fullName>
        </recommendedName>
    </component>
    <component>
        <recommendedName>
            <fullName>Peptide pr</fullName>
        </recommendedName>
    </component>
    <component>
        <recommendedName>
            <fullName>Small envelope protein M</fullName>
        </recommendedName>
        <alternativeName>
            <fullName>Matrix protein</fullName>
        </alternativeName>
    </component>
    <component>
        <recommendedName>
            <fullName>Envelope protein E</fullName>
        </recommendedName>
    </component>
    <component>
        <recommendedName>
            <fullName>Non-structural protein 1</fullName>
            <shortName>NS1</shortName>
        </recommendedName>
    </component>
    <component>
        <recommendedName>
            <fullName>Non-structural protein 2A</fullName>
            <shortName>NS2A</shortName>
        </recommendedName>
    </component>
    <component>
        <recommendedName>
            <fullName>Serine protease subunit NS2B</fullName>
        </recommendedName>
        <alternativeName>
            <fullName>Flavivirin protease NS2B regulatory subunit</fullName>
        </alternativeName>
        <alternativeName>
            <fullName>Non-structural protein 2B</fullName>
        </alternativeName>
    </component>
    <component>
        <recommendedName>
            <fullName>Serine protease NS3</fullName>
            <ecNumber>3.4.21.91</ecNumber>
            <ecNumber evidence="10">3.6.1.15</ecNumber>
            <ecNumber evidence="10">3.6.4.13</ecNumber>
        </recommendedName>
        <alternativeName>
            <fullName>Flavivirin protease NS3 catalytic subunit</fullName>
        </alternativeName>
        <alternativeName>
            <fullName>Non-structural protein 3</fullName>
        </alternativeName>
    </component>
    <component>
        <recommendedName>
            <fullName>Non-structural protein 4A</fullName>
            <shortName>NS4A</shortName>
        </recommendedName>
    </component>
    <component>
        <recommendedName>
            <fullName>Peptide 2k</fullName>
        </recommendedName>
    </component>
    <component>
        <recommendedName>
            <fullName>Non-structural protein 4B</fullName>
            <shortName>NS4B</shortName>
        </recommendedName>
    </component>
    <component>
        <recommendedName>
            <fullName>RNA-directed RNA polymerase NS5</fullName>
            <ecNumber evidence="18">2.1.1.56</ecNumber>
            <ecNumber evidence="18">2.1.1.57</ecNumber>
            <ecNumber evidence="13">2.7.7.48</ecNumber>
        </recommendedName>
        <alternativeName>
            <fullName>Non-structural protein 5</fullName>
        </alternativeName>
    </component>
</protein>
<reference key="1">
    <citation type="journal article" date="1992" name="Virology">
        <title>Full-length cDNA sequence of dengue type 1 virus (Singapore strain S275/90).</title>
        <authorList>
            <person name="Fu J."/>
            <person name="Tan B.H."/>
            <person name="Yap E.H."/>
            <person name="Chan Y.C."/>
            <person name="Tan Y.H."/>
        </authorList>
    </citation>
    <scope>NUCLEOTIDE SEQUENCE [GENOMIC RNA]</scope>
</reference>
<name>POLG_DEN1S</name>
<keyword id="KW-0002">3D-structure</keyword>
<keyword id="KW-0007">Acetylation</keyword>
<keyword id="KW-1072">Activation of host autophagy by virus</keyword>
<keyword id="KW-0067">ATP-binding</keyword>
<keyword id="KW-0167">Capsid protein</keyword>
<keyword id="KW-1165">Clathrin-mediated endocytosis of virus by host</keyword>
<keyword id="KW-0165">Cleavage on pair of basic residues</keyword>
<keyword id="KW-1015">Disulfide bond</keyword>
<keyword id="KW-1170">Fusion of virus membrane with host endosomal membrane</keyword>
<keyword id="KW-1168">Fusion of virus membrane with host membrane</keyword>
<keyword id="KW-0325">Glycoprotein</keyword>
<keyword id="KW-0347">Helicase</keyword>
<keyword id="KW-1035">Host cytoplasm</keyword>
<keyword id="KW-1038">Host endoplasmic reticulum</keyword>
<keyword id="KW-1043">Host membrane</keyword>
<keyword id="KW-1045">Host mitochondrion</keyword>
<keyword id="KW-1048">Host nucleus</keyword>
<keyword id="KW-0945">Host-virus interaction</keyword>
<keyword id="KW-0378">Hydrolase</keyword>
<keyword id="KW-1090">Inhibition of host innate immune response by virus</keyword>
<keyword id="KW-1114">Inhibition of host interferon signaling pathway by virus</keyword>
<keyword id="KW-1097">Inhibition of host MAVS by virus</keyword>
<keyword id="KW-1113">Inhibition of host RLR pathway by virus</keyword>
<keyword id="KW-1106">Inhibition of host STAT2 by virus</keyword>
<keyword id="KW-1112">Inhibition of host TYK2 by virus</keyword>
<keyword id="KW-0922">Interferon antiviral system evasion</keyword>
<keyword id="KW-0407">Ion channel</keyword>
<keyword id="KW-0406">Ion transport</keyword>
<keyword id="KW-0472">Membrane</keyword>
<keyword id="KW-0479">Metal-binding</keyword>
<keyword id="KW-0489">Methyltransferase</keyword>
<keyword id="KW-0506">mRNA capping</keyword>
<keyword id="KW-0507">mRNA processing</keyword>
<keyword id="KW-0511">Multifunctional enzyme</keyword>
<keyword id="KW-0547">Nucleotide-binding</keyword>
<keyword id="KW-0548">Nucleotidyltransferase</keyword>
<keyword id="KW-0597">Phosphoprotein</keyword>
<keyword id="KW-0645">Protease</keyword>
<keyword id="KW-0694">RNA-binding</keyword>
<keyword id="KW-0696">RNA-directed RNA polymerase</keyword>
<keyword id="KW-0949">S-adenosyl-L-methionine</keyword>
<keyword id="KW-0964">Secreted</keyword>
<keyword id="KW-0720">Serine protease</keyword>
<keyword id="KW-0941">Suppressor of RNA silencing</keyword>
<keyword id="KW-0804">Transcription</keyword>
<keyword id="KW-0805">Transcription regulation</keyword>
<keyword id="KW-0808">Transferase</keyword>
<keyword id="KW-0812">Transmembrane</keyword>
<keyword id="KW-1133">Transmembrane helix</keyword>
<keyword id="KW-0813">Transport</keyword>
<keyword id="KW-0832">Ubl conjugation</keyword>
<keyword id="KW-1161">Viral attachment to host cell</keyword>
<keyword id="KW-0261">Viral envelope protein</keyword>
<keyword id="KW-0899">Viral immunoevasion</keyword>
<keyword id="KW-1182">Viral ion channel</keyword>
<keyword id="KW-1162">Viral penetration into host cytoplasm</keyword>
<keyword id="KW-0693">Viral RNA replication</keyword>
<keyword id="KW-0946">Virion</keyword>
<keyword id="KW-1164">Virus endocytosis by host</keyword>
<keyword id="KW-1160">Virus entry into host cell</keyword>
<keyword id="KW-0862">Zinc</keyword>
<feature type="chain" id="PRO_0000405206" description="Genome polyprotein">
    <location>
        <begin position="1"/>
        <end position="3391"/>
    </location>
</feature>
<feature type="chain" id="PRO_0000037894" description="Capsid protein C" evidence="6">
    <location>
        <begin position="1"/>
        <end position="100"/>
    </location>
</feature>
<feature type="propeptide" id="PRO_0000037895" description="ER anchor for the capsid protein C, removed in mature form by serine protease NS3" evidence="6">
    <location>
        <begin position="101"/>
        <end position="114"/>
    </location>
</feature>
<feature type="chain" id="PRO_0000264654" description="Protein prM" evidence="6">
    <location>
        <begin position="115"/>
        <end position="280"/>
    </location>
</feature>
<feature type="chain" id="PRO_0000264655" description="Peptide pr" evidence="6">
    <location>
        <begin position="115"/>
        <end position="205"/>
    </location>
</feature>
<feature type="chain" id="PRO_0000037896" description="Small envelope protein M" evidence="6">
    <location>
        <begin position="206"/>
        <end position="280"/>
    </location>
</feature>
<feature type="chain" id="PRO_0000037897" description="Envelope protein E" evidence="6">
    <location>
        <begin position="281"/>
        <end position="774"/>
    </location>
</feature>
<feature type="chain" id="PRO_0000037898" description="Non-structural protein 1" evidence="6">
    <location>
        <begin position="775"/>
        <end position="1126"/>
    </location>
</feature>
<feature type="chain" id="PRO_0000037899" description="Non-structural protein 2A" evidence="6">
    <location>
        <begin position="1127"/>
        <end position="1344"/>
    </location>
</feature>
<feature type="chain" id="PRO_0000037900" description="Serine protease subunit NS2B" evidence="6">
    <location>
        <begin position="1345"/>
        <end position="1474"/>
    </location>
</feature>
<feature type="chain" id="PRO_0000037901" description="Serine protease NS3" evidence="6">
    <location>
        <begin position="1475"/>
        <end position="2093"/>
    </location>
</feature>
<feature type="chain" id="PRO_0000037902" description="Non-structural protein 4A" evidence="6">
    <location>
        <begin position="2094"/>
        <end position="2220"/>
    </location>
</feature>
<feature type="peptide" id="PRO_0000264657" description="Peptide 2k" evidence="6">
    <location>
        <begin position="2221"/>
        <end position="2243"/>
    </location>
</feature>
<feature type="chain" id="PRO_0000037903" description="Non-structural protein 4B" evidence="6">
    <location>
        <begin position="2244"/>
        <end position="2492"/>
    </location>
</feature>
<feature type="chain" id="PRO_0000437990" description="RNA-directed RNA polymerase NS5" evidence="6">
    <location>
        <begin position="2493"/>
        <end position="3391"/>
    </location>
</feature>
<feature type="topological domain" description="Cytoplasmic" evidence="11">
    <location>
        <begin position="1"/>
        <end position="101"/>
    </location>
</feature>
<feature type="transmembrane region" description="Helical" evidence="11">
    <location>
        <begin position="102"/>
        <end position="119"/>
    </location>
</feature>
<feature type="topological domain" description="Extracellular" evidence="11">
    <location>
        <begin position="120"/>
        <end position="242"/>
    </location>
</feature>
<feature type="transmembrane region" description="Helical" evidence="11">
    <location>
        <begin position="243"/>
        <end position="260"/>
    </location>
</feature>
<feature type="topological domain" description="Cytoplasmic" evidence="11">
    <location>
        <position position="261"/>
    </location>
</feature>
<feature type="transmembrane region" description="Helical" evidence="11">
    <location>
        <begin position="262"/>
        <end position="280"/>
    </location>
</feature>
<feature type="topological domain" description="Extracellular" evidence="11">
    <location>
        <begin position="281"/>
        <end position="725"/>
    </location>
</feature>
<feature type="transmembrane region" description="Helical" evidence="11">
    <location>
        <begin position="726"/>
        <end position="746"/>
    </location>
</feature>
<feature type="topological domain" description="Cytoplasmic" evidence="11">
    <location>
        <begin position="747"/>
        <end position="752"/>
    </location>
</feature>
<feature type="transmembrane region" description="Helical" evidence="11">
    <location>
        <begin position="753"/>
        <end position="773"/>
    </location>
</feature>
<feature type="topological domain" description="Extracellular" evidence="11">
    <location>
        <begin position="774"/>
        <end position="1198"/>
    </location>
</feature>
<feature type="transmembrane region" description="Helical" evidence="11">
    <location>
        <begin position="1199"/>
        <end position="1219"/>
    </location>
</feature>
<feature type="topological domain" description="Cytoplasmic" evidence="11">
    <location>
        <begin position="1220"/>
        <end position="1225"/>
    </location>
</feature>
<feature type="transmembrane region" description="Helical" evidence="11">
    <location>
        <begin position="1226"/>
        <end position="1244"/>
    </location>
</feature>
<feature type="topological domain" description="Lumenal" evidence="11">
    <location>
        <begin position="1245"/>
        <end position="1268"/>
    </location>
</feature>
<feature type="transmembrane region" description="Helical" evidence="11">
    <location>
        <begin position="1269"/>
        <end position="1289"/>
    </location>
</feature>
<feature type="topological domain" description="Cytoplasmic" evidence="11">
    <location>
        <position position="1290"/>
    </location>
</feature>
<feature type="transmembrane region" description="Helical" evidence="11">
    <location>
        <begin position="1291"/>
        <end position="1309"/>
    </location>
</feature>
<feature type="topological domain" description="Lumenal" evidence="11">
    <location>
        <begin position="1310"/>
        <end position="1314"/>
    </location>
</feature>
<feature type="transmembrane region" description="Helical" evidence="11">
    <location>
        <begin position="1315"/>
        <end position="1335"/>
    </location>
</feature>
<feature type="topological domain" description="Cytoplasmic" evidence="11">
    <location>
        <begin position="1336"/>
        <end position="1345"/>
    </location>
</feature>
<feature type="transmembrane region" description="Helical" evidence="11">
    <location>
        <begin position="1346"/>
        <end position="1366"/>
    </location>
</feature>
<feature type="topological domain" description="Lumenal" evidence="11">
    <location>
        <begin position="1367"/>
        <end position="1369"/>
    </location>
</feature>
<feature type="transmembrane region" description="Helical" evidence="11">
    <location>
        <begin position="1370"/>
        <end position="1390"/>
    </location>
</feature>
<feature type="topological domain" description="Cytoplasmic" evidence="11">
    <location>
        <begin position="1391"/>
        <end position="1446"/>
    </location>
</feature>
<feature type="intramembrane region" description="Helical" evidence="11">
    <location>
        <begin position="1447"/>
        <end position="1467"/>
    </location>
</feature>
<feature type="topological domain" description="Cytoplasmic" evidence="11">
    <location>
        <begin position="1468"/>
        <end position="2147"/>
    </location>
</feature>
<feature type="transmembrane region" description="Helical" evidence="11">
    <location>
        <begin position="2148"/>
        <end position="2168"/>
    </location>
</feature>
<feature type="topological domain" description="Lumenal" evidence="11">
    <location>
        <begin position="2169"/>
        <end position="2170"/>
    </location>
</feature>
<feature type="intramembrane region" description="Helical" evidence="11">
    <location>
        <begin position="2171"/>
        <end position="2191"/>
    </location>
</feature>
<feature type="topological domain" description="Lumenal" evidence="11">
    <location>
        <position position="2192"/>
    </location>
</feature>
<feature type="transmembrane region" description="Helical" evidence="11">
    <location>
        <begin position="2193"/>
        <end position="2213"/>
    </location>
</feature>
<feature type="topological domain" description="Cytoplasmic" evidence="11">
    <location>
        <begin position="2214"/>
        <end position="2228"/>
    </location>
</feature>
<feature type="transmembrane region" description="Helical; Note=Signal for NS4B" evidence="11">
    <location>
        <begin position="2229"/>
        <end position="2249"/>
    </location>
</feature>
<feature type="topological domain" description="Lumenal" evidence="11">
    <location>
        <begin position="2250"/>
        <end position="2275"/>
    </location>
</feature>
<feature type="intramembrane region" description="Helical" evidence="11">
    <location>
        <begin position="2276"/>
        <end position="2296"/>
    </location>
</feature>
<feature type="topological domain" description="Lumenal" evidence="11">
    <location>
        <begin position="2297"/>
        <end position="2348"/>
    </location>
</feature>
<feature type="transmembrane region" description="Helical" evidence="11">
    <location>
        <begin position="2349"/>
        <end position="2369"/>
    </location>
</feature>
<feature type="topological domain" description="Cytoplasmic" evidence="11">
    <location>
        <begin position="2370"/>
        <end position="2414"/>
    </location>
</feature>
<feature type="transmembrane region" description="Helical" evidence="11">
    <location>
        <begin position="2415"/>
        <end position="2435"/>
    </location>
</feature>
<feature type="topological domain" description="Lumenal" evidence="11">
    <location>
        <begin position="2436"/>
        <end position="2460"/>
    </location>
</feature>
<feature type="transmembrane region" description="Helical" evidence="11">
    <location>
        <begin position="2461"/>
        <end position="2481"/>
    </location>
</feature>
<feature type="topological domain" description="Cytoplasmic" evidence="11">
    <location>
        <begin position="2482"/>
        <end position="3391"/>
    </location>
</feature>
<feature type="domain" description="Peptidase S7" evidence="17">
    <location>
        <begin position="1475"/>
        <end position="1652"/>
    </location>
</feature>
<feature type="domain" description="Helicase ATP-binding" evidence="14">
    <location>
        <begin position="1655"/>
        <end position="1811"/>
    </location>
</feature>
<feature type="domain" description="Helicase C-terminal" evidence="15">
    <location>
        <begin position="1821"/>
        <end position="1988"/>
    </location>
</feature>
<feature type="domain" description="mRNA cap 0-1 NS5-type MT" evidence="18">
    <location>
        <begin position="2494"/>
        <end position="2755"/>
    </location>
</feature>
<feature type="domain" description="RdRp catalytic" evidence="13">
    <location>
        <begin position="3019"/>
        <end position="3168"/>
    </location>
</feature>
<feature type="region of interest" description="Interaction with host EXOC1" evidence="5">
    <location>
        <begin position="1"/>
        <end position="15"/>
    </location>
</feature>
<feature type="region of interest" description="Hydrophobic; homodimerization of capsid protein C" evidence="6">
    <location>
        <begin position="37"/>
        <end position="72"/>
    </location>
</feature>
<feature type="region of interest" description="Fusion peptide" evidence="3">
    <location>
        <begin position="378"/>
        <end position="391"/>
    </location>
</feature>
<feature type="region of interest" description="Interacts with and activates NS3 protease" evidence="16">
    <location>
        <begin position="1397"/>
        <end position="1436"/>
    </location>
</feature>
<feature type="region of interest" description="Important for RNA-binding" evidence="4">
    <location>
        <begin position="1659"/>
        <end position="1662"/>
    </location>
</feature>
<feature type="short sequence motif" description="DEAH box" evidence="14">
    <location>
        <begin position="1759"/>
        <end position="1762"/>
    </location>
</feature>
<feature type="short sequence motif" description="SUMO-interacting motif" evidence="6">
    <location>
        <begin position="2569"/>
        <end position="2572"/>
    </location>
</feature>
<feature type="active site" description="Charge relay system; for serine protease NS3 activity" evidence="17">
    <location>
        <position position="1525"/>
    </location>
</feature>
<feature type="active site" description="Charge relay system; for serine protease NS3 activity" evidence="17">
    <location>
        <position position="1549"/>
    </location>
</feature>
<feature type="active site" description="Charge relay system; for serine protease NS3 activity" evidence="17">
    <location>
        <position position="1609"/>
    </location>
</feature>
<feature type="active site" description="For 2'-O-MTase activity" evidence="9">
    <location>
        <position position="2553"/>
    </location>
</feature>
<feature type="active site" description="For 2'-O-MTase activity" evidence="9">
    <location>
        <position position="2638"/>
    </location>
</feature>
<feature type="active site" description="For 2'-O-MTase activity" evidence="9">
    <location>
        <position position="2672"/>
    </location>
</feature>
<feature type="active site" description="For 2'-O-MTase activity" evidence="9">
    <location>
        <position position="2708"/>
    </location>
</feature>
<feature type="binding site" evidence="14">
    <location>
        <begin position="1668"/>
        <end position="1675"/>
    </location>
    <ligand>
        <name>ATP</name>
        <dbReference type="ChEBI" id="CHEBI:30616"/>
    </ligand>
</feature>
<feature type="binding site" evidence="18">
    <location>
        <position position="2548"/>
    </location>
    <ligand>
        <name>S-adenosyl-L-methionine</name>
        <dbReference type="ChEBI" id="CHEBI:59789"/>
    </ligand>
</feature>
<feature type="binding site" evidence="18">
    <location>
        <position position="2578"/>
    </location>
    <ligand>
        <name>S-adenosyl-L-methionine</name>
        <dbReference type="ChEBI" id="CHEBI:59789"/>
    </ligand>
</feature>
<feature type="binding site" evidence="18">
    <location>
        <position position="2579"/>
    </location>
    <ligand>
        <name>S-adenosyl-L-methionine</name>
        <dbReference type="ChEBI" id="CHEBI:59789"/>
    </ligand>
</feature>
<feature type="binding site" evidence="18">
    <location>
        <position position="2596"/>
    </location>
    <ligand>
        <name>S-adenosyl-L-methionine</name>
        <dbReference type="ChEBI" id="CHEBI:59789"/>
    </ligand>
</feature>
<feature type="binding site" evidence="18">
    <location>
        <position position="2597"/>
    </location>
    <ligand>
        <name>S-adenosyl-L-methionine</name>
        <dbReference type="ChEBI" id="CHEBI:59789"/>
    </ligand>
</feature>
<feature type="binding site" evidence="18">
    <location>
        <position position="2623"/>
    </location>
    <ligand>
        <name>S-adenosyl-L-methionine</name>
        <dbReference type="ChEBI" id="CHEBI:59789"/>
    </ligand>
</feature>
<feature type="binding site" evidence="18">
    <location>
        <position position="2624"/>
    </location>
    <ligand>
        <name>S-adenosyl-L-methionine</name>
        <dbReference type="ChEBI" id="CHEBI:59789"/>
    </ligand>
</feature>
<feature type="binding site" evidence="18">
    <location>
        <position position="2639"/>
    </location>
    <ligand>
        <name>S-adenosyl-L-methionine</name>
        <dbReference type="ChEBI" id="CHEBI:59789"/>
    </ligand>
</feature>
<feature type="binding site" evidence="18">
    <location>
        <position position="2710"/>
    </location>
    <ligand>
        <name>S-adenosyl-L-methionine</name>
        <dbReference type="ChEBI" id="CHEBI:59789"/>
    </ligand>
</feature>
<feature type="binding site" evidence="9">
    <location>
        <position position="2929"/>
    </location>
    <ligand>
        <name>Zn(2+)</name>
        <dbReference type="ChEBI" id="CHEBI:29105"/>
        <label>1</label>
    </ligand>
</feature>
<feature type="binding site" evidence="9">
    <location>
        <position position="2933"/>
    </location>
    <ligand>
        <name>Zn(2+)</name>
        <dbReference type="ChEBI" id="CHEBI:29105"/>
        <label>1</label>
    </ligand>
</feature>
<feature type="binding site" evidence="9">
    <location>
        <position position="2938"/>
    </location>
    <ligand>
        <name>Zn(2+)</name>
        <dbReference type="ChEBI" id="CHEBI:29105"/>
        <label>1</label>
    </ligand>
</feature>
<feature type="binding site" evidence="9">
    <location>
        <position position="2941"/>
    </location>
    <ligand>
        <name>Zn(2+)</name>
        <dbReference type="ChEBI" id="CHEBI:29105"/>
        <label>1</label>
    </ligand>
</feature>
<feature type="binding site" evidence="9">
    <location>
        <position position="3203"/>
    </location>
    <ligand>
        <name>Zn(2+)</name>
        <dbReference type="ChEBI" id="CHEBI:29105"/>
        <label>2</label>
    </ligand>
</feature>
<feature type="binding site" evidence="9">
    <location>
        <position position="3219"/>
    </location>
    <ligand>
        <name>Zn(2+)</name>
        <dbReference type="ChEBI" id="CHEBI:29105"/>
        <label>2</label>
    </ligand>
</feature>
<feature type="binding site" evidence="9">
    <location>
        <position position="3338"/>
    </location>
    <ligand>
        <name>Zn(2+)</name>
        <dbReference type="ChEBI" id="CHEBI:29105"/>
        <label>2</label>
    </ligand>
</feature>
<feature type="site" description="Cleavage; by viral protease NS3" evidence="6">
    <location>
        <begin position="100"/>
        <end position="101"/>
    </location>
</feature>
<feature type="site" description="Cleavage; by host signal peptidase" evidence="6">
    <location>
        <begin position="114"/>
        <end position="115"/>
    </location>
</feature>
<feature type="site" description="Cleavage; by host furin" evidence="6 11">
    <location>
        <begin position="205"/>
        <end position="206"/>
    </location>
</feature>
<feature type="site" description="Cleavage; by host signal peptidase" evidence="6">
    <location>
        <begin position="280"/>
        <end position="281"/>
    </location>
</feature>
<feature type="site" description="Cleavage; by host signal peptidase" evidence="6">
    <location>
        <begin position="774"/>
        <end position="775"/>
    </location>
</feature>
<feature type="site" description="Cleavage; by host" evidence="6">
    <location>
        <begin position="1126"/>
        <end position="1127"/>
    </location>
</feature>
<feature type="site" description="Cleavage; by viral protease NS3" evidence="6">
    <location>
        <begin position="1344"/>
        <end position="1345"/>
    </location>
</feature>
<feature type="site" description="Cleavage; by autolysis" evidence="6">
    <location>
        <begin position="1474"/>
        <end position="1475"/>
    </location>
</feature>
<feature type="site" description="Involved in NS3 ATPase and RTPase activities" evidence="2">
    <location>
        <position position="1932"/>
    </location>
</feature>
<feature type="site" description="Involved in NS3 ATPase and RTPase activities" evidence="2">
    <location>
        <position position="1935"/>
    </location>
</feature>
<feature type="site" description="Cleavage; by autolysis" evidence="6">
    <location>
        <begin position="2093"/>
        <end position="2094"/>
    </location>
</feature>
<feature type="site" description="Cleavage; by viral protease NS3" evidence="6">
    <location>
        <begin position="2220"/>
        <end position="2221"/>
    </location>
</feature>
<feature type="site" description="Cleavage; by host signal peptidase" evidence="6">
    <location>
        <begin position="2243"/>
        <end position="2244"/>
    </location>
</feature>
<feature type="site" description="Cleavage; by viral protease NS3" evidence="6">
    <location>
        <begin position="2492"/>
        <end position="2493"/>
    </location>
</feature>
<feature type="site" description="mRNA cap binding" evidence="18">
    <location>
        <position position="2506"/>
    </location>
</feature>
<feature type="site" description="mRNA cap binding; via carbonyl oxygen" evidence="18">
    <location>
        <position position="2509"/>
    </location>
</feature>
<feature type="site" description="mRNA cap binding" evidence="18">
    <location>
        <position position="2510"/>
    </location>
</feature>
<feature type="site" description="mRNA cap binding; via carbonyl oxygen" evidence="18">
    <location>
        <position position="2512"/>
    </location>
</feature>
<feature type="site" description="mRNA cap binding" evidence="18">
    <location>
        <position position="2517"/>
    </location>
</feature>
<feature type="site" description="mRNA cap binding" evidence="18">
    <location>
        <position position="2521"/>
    </location>
</feature>
<feature type="site" description="Essential for 2'-O-methyltransferase activity" evidence="18">
    <location>
        <position position="2553"/>
    </location>
</feature>
<feature type="site" description="Essential for 2'-O-methyltransferase and N-7 methyltransferase activity" evidence="18">
    <location>
        <position position="2638"/>
    </location>
</feature>
<feature type="site" description="mRNA cap binding" evidence="18">
    <location>
        <position position="2642"/>
    </location>
</feature>
<feature type="site" description="Essential for 2'-O-methyltransferase activity" evidence="18">
    <location>
        <position position="2672"/>
    </location>
</feature>
<feature type="site" description="mRNA cap binding" evidence="18">
    <location>
        <position position="2703"/>
    </location>
</feature>
<feature type="site" description="mRNA cap binding" evidence="18">
    <location>
        <position position="2705"/>
    </location>
</feature>
<feature type="site" description="Essential for 2'-O-methyltransferase activity" evidence="18">
    <location>
        <position position="2708"/>
    </location>
</feature>
<feature type="modified residue" description="N6-acetyllysine; by host" evidence="8">
    <location>
        <position position="1863"/>
    </location>
</feature>
<feature type="modified residue" description="Phosphoserine" evidence="1">
    <location>
        <position position="2548"/>
    </location>
</feature>
<feature type="glycosylation site" description="N-linked (GlcNAc...) asparagine; by host" evidence="12">
    <location>
        <position position="183"/>
    </location>
</feature>
<feature type="glycosylation site" description="N-linked (GlcNAc...) asparagine; by host" evidence="12">
    <location>
        <position position="347"/>
    </location>
</feature>
<feature type="glycosylation site" description="N-linked (GlcNAc...) asparagine; by host" evidence="12">
    <location>
        <position position="433"/>
    </location>
</feature>
<feature type="glycosylation site" description="N-linked (GlcNAc...) asparagine; by host" evidence="12">
    <location>
        <position position="904"/>
    </location>
</feature>
<feature type="glycosylation site" description="N-linked (GlcNAc...) asparagine; by host" evidence="12">
    <location>
        <position position="981"/>
    </location>
</feature>
<feature type="glycosylation site" description="N-linked (GlcNAc...) asparagine; by host" evidence="12">
    <location>
        <position position="1189"/>
    </location>
</feature>
<feature type="glycosylation site" description="N-linked (GlcNAc...) asparagine; by host" evidence="12">
    <location>
        <position position="2302"/>
    </location>
</feature>
<feature type="glycosylation site" description="N-linked (GlcNAc...) asparagine; by host" evidence="12">
    <location>
        <position position="2306"/>
    </location>
</feature>
<feature type="glycosylation site" description="N-linked (GlcNAc...) asparagine; by host" evidence="12">
    <location>
        <position position="2458"/>
    </location>
</feature>
<feature type="disulfide bond" evidence="5">
    <location>
        <begin position="283"/>
        <end position="310"/>
    </location>
</feature>
<feature type="disulfide bond" evidence="5">
    <location>
        <begin position="340"/>
        <end position="401"/>
    </location>
</feature>
<feature type="disulfide bond" evidence="5">
    <location>
        <begin position="354"/>
        <end position="385"/>
    </location>
</feature>
<feature type="disulfide bond" evidence="5">
    <location>
        <begin position="372"/>
        <end position="396"/>
    </location>
</feature>
<feature type="disulfide bond" evidence="5">
    <location>
        <begin position="465"/>
        <end position="565"/>
    </location>
</feature>
<feature type="disulfide bond" evidence="5">
    <location>
        <begin position="582"/>
        <end position="613"/>
    </location>
</feature>
<feature type="disulfide bond" evidence="5">
    <location>
        <begin position="778"/>
        <end position="789"/>
    </location>
</feature>
<feature type="disulfide bond" evidence="5">
    <location>
        <begin position="829"/>
        <end position="917"/>
    </location>
</feature>
<feature type="disulfide bond" evidence="5">
    <location>
        <begin position="953"/>
        <end position="997"/>
    </location>
</feature>
<feature type="disulfide bond" evidence="5">
    <location>
        <begin position="1054"/>
        <end position="1103"/>
    </location>
</feature>
<feature type="disulfide bond" evidence="5">
    <location>
        <begin position="1065"/>
        <end position="1087"/>
    </location>
</feature>
<feature type="disulfide bond" evidence="5">
    <location>
        <begin position="1086"/>
        <end position="1090"/>
    </location>
</feature>
<feature type="strand" evidence="19">
    <location>
        <begin position="1395"/>
        <end position="1401"/>
    </location>
</feature>
<feature type="strand" evidence="19">
    <location>
        <begin position="1420"/>
        <end position="1422"/>
    </location>
</feature>
<feature type="strand" evidence="19">
    <location>
        <begin position="1428"/>
        <end position="1430"/>
    </location>
</feature>
<feature type="strand" evidence="19">
    <location>
        <begin position="1495"/>
        <end position="1499"/>
    </location>
</feature>
<accession>P33478</accession>
<evidence type="ECO:0000250" key="1">
    <source>
        <dbReference type="UniProtKB" id="P03314"/>
    </source>
</evidence>
<evidence type="ECO:0000250" key="2">
    <source>
        <dbReference type="UniProtKB" id="P14335"/>
    </source>
</evidence>
<evidence type="ECO:0000250" key="3">
    <source>
        <dbReference type="UniProtKB" id="P14336"/>
    </source>
</evidence>
<evidence type="ECO:0000250" key="4">
    <source>
        <dbReference type="UniProtKB" id="P14340"/>
    </source>
</evidence>
<evidence type="ECO:0000250" key="5">
    <source>
        <dbReference type="UniProtKB" id="P17763"/>
    </source>
</evidence>
<evidence type="ECO:0000250" key="6">
    <source>
        <dbReference type="UniProtKB" id="P29990"/>
    </source>
</evidence>
<evidence type="ECO:0000250" key="7">
    <source>
        <dbReference type="UniProtKB" id="P29991"/>
    </source>
</evidence>
<evidence type="ECO:0000250" key="8">
    <source>
        <dbReference type="UniProtKB" id="Q32ZE1"/>
    </source>
</evidence>
<evidence type="ECO:0000250" key="9">
    <source>
        <dbReference type="UniProtKB" id="Q6YMS4"/>
    </source>
</evidence>
<evidence type="ECO:0000250" key="10">
    <source>
        <dbReference type="UniProtKB" id="Q9Q6P4"/>
    </source>
</evidence>
<evidence type="ECO:0000255" key="11"/>
<evidence type="ECO:0000255" key="12">
    <source>
        <dbReference type="PROSITE-ProRule" id="PRU00498"/>
    </source>
</evidence>
<evidence type="ECO:0000255" key="13">
    <source>
        <dbReference type="PROSITE-ProRule" id="PRU00539"/>
    </source>
</evidence>
<evidence type="ECO:0000255" key="14">
    <source>
        <dbReference type="PROSITE-ProRule" id="PRU00541"/>
    </source>
</evidence>
<evidence type="ECO:0000255" key="15">
    <source>
        <dbReference type="PROSITE-ProRule" id="PRU00542"/>
    </source>
</evidence>
<evidence type="ECO:0000255" key="16">
    <source>
        <dbReference type="PROSITE-ProRule" id="PRU00859"/>
    </source>
</evidence>
<evidence type="ECO:0000255" key="17">
    <source>
        <dbReference type="PROSITE-ProRule" id="PRU00860"/>
    </source>
</evidence>
<evidence type="ECO:0000255" key="18">
    <source>
        <dbReference type="PROSITE-ProRule" id="PRU00924"/>
    </source>
</evidence>
<evidence type="ECO:0007829" key="19">
    <source>
        <dbReference type="PDB" id="3LKW"/>
    </source>
</evidence>
<dbReference type="EC" id="3.4.21.91"/>
<dbReference type="EC" id="3.6.1.15" evidence="10"/>
<dbReference type="EC" id="3.6.4.13" evidence="10"/>
<dbReference type="EC" id="2.1.1.56" evidence="18"/>
<dbReference type="EC" id="2.1.1.57" evidence="18"/>
<dbReference type="EC" id="2.7.7.48" evidence="13"/>
<dbReference type="EMBL" id="M87512">
    <property type="status" value="NOT_ANNOTATED_CDS"/>
    <property type="molecule type" value="Genomic_RNA"/>
</dbReference>
<dbReference type="PIR" id="A42551">
    <property type="entry name" value="A42551"/>
</dbReference>
<dbReference type="PDB" id="3L6P">
    <property type="method" value="X-ray"/>
    <property type="resolution" value="2.20 A"/>
    <property type="chains" value="A=1393-1439, A=1475-1499"/>
</dbReference>
<dbReference type="PDB" id="3LKW">
    <property type="method" value="X-ray"/>
    <property type="resolution" value="2.00 A"/>
    <property type="chains" value="A=1393-1439, A=1475-1499"/>
</dbReference>
<dbReference type="PDBsum" id="3L6P"/>
<dbReference type="PDBsum" id="3LKW"/>
<dbReference type="SMR" id="P33478"/>
<dbReference type="BindingDB" id="P33478"/>
<dbReference type="MEROPS" id="S07.001"/>
<dbReference type="PRO" id="PR:P33478"/>
<dbReference type="Proteomes" id="UP000007194">
    <property type="component" value="Genome"/>
</dbReference>
<dbReference type="GO" id="GO:0005576">
    <property type="term" value="C:extracellular region"/>
    <property type="evidence" value="ECO:0007669"/>
    <property type="project" value="UniProtKB-SubCell"/>
</dbReference>
<dbReference type="GO" id="GO:0044167">
    <property type="term" value="C:host cell endoplasmic reticulum membrane"/>
    <property type="evidence" value="ECO:0007669"/>
    <property type="project" value="UniProtKB-SubCell"/>
</dbReference>
<dbReference type="GO" id="GO:0033650">
    <property type="term" value="C:host cell mitochondrion"/>
    <property type="evidence" value="ECO:0007669"/>
    <property type="project" value="UniProtKB-SubCell"/>
</dbReference>
<dbReference type="GO" id="GO:0042025">
    <property type="term" value="C:host cell nucleus"/>
    <property type="evidence" value="ECO:0007669"/>
    <property type="project" value="UniProtKB-SubCell"/>
</dbReference>
<dbReference type="GO" id="GO:0044220">
    <property type="term" value="C:host cell perinuclear region of cytoplasm"/>
    <property type="evidence" value="ECO:0007669"/>
    <property type="project" value="UniProtKB-SubCell"/>
</dbReference>
<dbReference type="GO" id="GO:0016020">
    <property type="term" value="C:membrane"/>
    <property type="evidence" value="ECO:0007669"/>
    <property type="project" value="UniProtKB-KW"/>
</dbReference>
<dbReference type="GO" id="GO:0019028">
    <property type="term" value="C:viral capsid"/>
    <property type="evidence" value="ECO:0007669"/>
    <property type="project" value="UniProtKB-KW"/>
</dbReference>
<dbReference type="GO" id="GO:0019031">
    <property type="term" value="C:viral envelope"/>
    <property type="evidence" value="ECO:0007669"/>
    <property type="project" value="UniProtKB-KW"/>
</dbReference>
<dbReference type="GO" id="GO:0055036">
    <property type="term" value="C:virion membrane"/>
    <property type="evidence" value="ECO:0007669"/>
    <property type="project" value="UniProtKB-SubCell"/>
</dbReference>
<dbReference type="GO" id="GO:0005524">
    <property type="term" value="F:ATP binding"/>
    <property type="evidence" value="ECO:0007669"/>
    <property type="project" value="UniProtKB-KW"/>
</dbReference>
<dbReference type="GO" id="GO:0016887">
    <property type="term" value="F:ATP hydrolysis activity"/>
    <property type="evidence" value="ECO:0007669"/>
    <property type="project" value="RHEA"/>
</dbReference>
<dbReference type="GO" id="GO:0015267">
    <property type="term" value="F:channel activity"/>
    <property type="evidence" value="ECO:0007669"/>
    <property type="project" value="UniProtKB-KW"/>
</dbReference>
<dbReference type="GO" id="GO:0003725">
    <property type="term" value="F:double-stranded RNA binding"/>
    <property type="evidence" value="ECO:0007669"/>
    <property type="project" value="InterPro"/>
</dbReference>
<dbReference type="GO" id="GO:0046872">
    <property type="term" value="F:metal ion binding"/>
    <property type="evidence" value="ECO:0007669"/>
    <property type="project" value="UniProtKB-KW"/>
</dbReference>
<dbReference type="GO" id="GO:0004483">
    <property type="term" value="F:mRNA (nucleoside-2'-O-)-methyltransferase activity"/>
    <property type="evidence" value="ECO:0007669"/>
    <property type="project" value="UniProtKB-EC"/>
</dbReference>
<dbReference type="GO" id="GO:0004482">
    <property type="term" value="F:mRNA 5'-cap (guanine-N7-)-methyltransferase activity"/>
    <property type="evidence" value="ECO:0007669"/>
    <property type="project" value="UniProtKB-EC"/>
</dbReference>
<dbReference type="GO" id="GO:0046983">
    <property type="term" value="F:protein dimerization activity"/>
    <property type="evidence" value="ECO:0007669"/>
    <property type="project" value="InterPro"/>
</dbReference>
<dbReference type="GO" id="GO:0003724">
    <property type="term" value="F:RNA helicase activity"/>
    <property type="evidence" value="ECO:0007669"/>
    <property type="project" value="UniProtKB-EC"/>
</dbReference>
<dbReference type="GO" id="GO:0003968">
    <property type="term" value="F:RNA-directed RNA polymerase activity"/>
    <property type="evidence" value="ECO:0007669"/>
    <property type="project" value="UniProtKB-KW"/>
</dbReference>
<dbReference type="GO" id="GO:0004252">
    <property type="term" value="F:serine-type endopeptidase activity"/>
    <property type="evidence" value="ECO:0007669"/>
    <property type="project" value="InterPro"/>
</dbReference>
<dbReference type="GO" id="GO:0005198">
    <property type="term" value="F:structural molecule activity"/>
    <property type="evidence" value="ECO:0007669"/>
    <property type="project" value="InterPro"/>
</dbReference>
<dbReference type="GO" id="GO:0075512">
    <property type="term" value="P:clathrin-dependent endocytosis of virus by host cell"/>
    <property type="evidence" value="ECO:0007669"/>
    <property type="project" value="UniProtKB-KW"/>
</dbReference>
<dbReference type="GO" id="GO:0039654">
    <property type="term" value="P:fusion of virus membrane with host endosome membrane"/>
    <property type="evidence" value="ECO:0007669"/>
    <property type="project" value="UniProtKB-KW"/>
</dbReference>
<dbReference type="GO" id="GO:0034220">
    <property type="term" value="P:monoatomic ion transmembrane transport"/>
    <property type="evidence" value="ECO:0007669"/>
    <property type="project" value="UniProtKB-KW"/>
</dbReference>
<dbReference type="GO" id="GO:0006508">
    <property type="term" value="P:proteolysis"/>
    <property type="evidence" value="ECO:0007669"/>
    <property type="project" value="UniProtKB-KW"/>
</dbReference>
<dbReference type="GO" id="GO:0039520">
    <property type="term" value="P:symbiont-mediated activation of host autophagy"/>
    <property type="evidence" value="ECO:0007669"/>
    <property type="project" value="UniProtKB-KW"/>
</dbReference>
<dbReference type="GO" id="GO:0039545">
    <property type="term" value="P:symbiont-mediated suppression of host cytoplasmic pattern recognition receptor signaling pathway via inhibition of MAVS activity"/>
    <property type="evidence" value="ECO:0007669"/>
    <property type="project" value="UniProtKB-KW"/>
</dbReference>
<dbReference type="GO" id="GO:0039574">
    <property type="term" value="P:symbiont-mediated suppression of host JAK-STAT cascade via inhibition of host TYK2 activity"/>
    <property type="evidence" value="ECO:0007669"/>
    <property type="project" value="UniProtKB-KW"/>
</dbReference>
<dbReference type="GO" id="GO:0039564">
    <property type="term" value="P:symbiont-mediated suppression of host JAK-STAT cascade via inhibition of STAT2 activity"/>
    <property type="evidence" value="ECO:0007669"/>
    <property type="project" value="UniProtKB-KW"/>
</dbReference>
<dbReference type="GO" id="GO:0039502">
    <property type="term" value="P:symbiont-mediated suppression of host type I interferon-mediated signaling pathway"/>
    <property type="evidence" value="ECO:0007669"/>
    <property type="project" value="UniProtKB-KW"/>
</dbReference>
<dbReference type="GO" id="GO:0039694">
    <property type="term" value="P:viral RNA genome replication"/>
    <property type="evidence" value="ECO:0007669"/>
    <property type="project" value="InterPro"/>
</dbReference>
<dbReference type="GO" id="GO:0019062">
    <property type="term" value="P:virion attachment to host cell"/>
    <property type="evidence" value="ECO:0007669"/>
    <property type="project" value="UniProtKB-KW"/>
</dbReference>
<dbReference type="CDD" id="cd20761">
    <property type="entry name" value="capping_2-OMTase_Flaviviridae"/>
    <property type="match status" value="1"/>
</dbReference>
<dbReference type="CDD" id="cd17931">
    <property type="entry name" value="DEXHc_viral_Ns3"/>
    <property type="match status" value="1"/>
</dbReference>
<dbReference type="CDD" id="cd12149">
    <property type="entry name" value="Flavi_E_C"/>
    <property type="match status" value="1"/>
</dbReference>
<dbReference type="CDD" id="cd17038">
    <property type="entry name" value="Flavi_M"/>
    <property type="match status" value="1"/>
</dbReference>
<dbReference type="CDD" id="cd23204">
    <property type="entry name" value="Flavivirus_RdRp"/>
    <property type="match status" value="1"/>
</dbReference>
<dbReference type="CDD" id="cd18806">
    <property type="entry name" value="SF2_C_viral"/>
    <property type="match status" value="1"/>
</dbReference>
<dbReference type="FunFam" id="1.20.1280.260:FF:000001">
    <property type="entry name" value="Envelope glycoprotein"/>
    <property type="match status" value="1"/>
</dbReference>
<dbReference type="FunFam" id="2.60.40.350:FF:000001">
    <property type="entry name" value="Envelope glycoprotein"/>
    <property type="match status" value="1"/>
</dbReference>
<dbReference type="FunFam" id="1.10.10.930:FF:000001">
    <property type="entry name" value="Genome polyprotein"/>
    <property type="match status" value="1"/>
</dbReference>
<dbReference type="FunFam" id="2.60.260.50:FF:000001">
    <property type="entry name" value="Genome polyprotein"/>
    <property type="match status" value="1"/>
</dbReference>
<dbReference type="FunFam" id="3.30.70.2840:FF:000001">
    <property type="entry name" value="Genome polyprotein"/>
    <property type="match status" value="1"/>
</dbReference>
<dbReference type="FunFam" id="3.30.70.2840:FF:000002">
    <property type="entry name" value="Genome polyprotein"/>
    <property type="match status" value="1"/>
</dbReference>
<dbReference type="FunFam" id="3.40.50.150:FF:000105">
    <property type="entry name" value="Genome polyprotein"/>
    <property type="match status" value="1"/>
</dbReference>
<dbReference type="FunFam" id="3.40.50.300:FF:000763">
    <property type="entry name" value="Genome polyprotein"/>
    <property type="match status" value="1"/>
</dbReference>
<dbReference type="Gene3D" id="1.10.10.930">
    <property type="match status" value="1"/>
</dbReference>
<dbReference type="Gene3D" id="1.10.260.90">
    <property type="match status" value="1"/>
</dbReference>
<dbReference type="Gene3D" id="1.20.1280.260">
    <property type="match status" value="1"/>
</dbReference>
<dbReference type="Gene3D" id="2.40.10.120">
    <property type="match status" value="2"/>
</dbReference>
<dbReference type="Gene3D" id="2.60.40.350">
    <property type="match status" value="1"/>
</dbReference>
<dbReference type="Gene3D" id="1.10.8.970">
    <property type="entry name" value="Flavivirus envelope glycoprotein M-like"/>
    <property type="match status" value="1"/>
</dbReference>
<dbReference type="Gene3D" id="2.60.260.50">
    <property type="entry name" value="Flavivirus polyprotein propeptide domain"/>
    <property type="match status" value="1"/>
</dbReference>
<dbReference type="Gene3D" id="3.30.70.2840">
    <property type="entry name" value="Flavivirus RNA-directed RNA polymerase, thumb domain"/>
    <property type="match status" value="3"/>
</dbReference>
<dbReference type="Gene3D" id="3.40.50.300">
    <property type="entry name" value="P-loop containing nucleotide triphosphate hydrolases"/>
    <property type="match status" value="2"/>
</dbReference>
<dbReference type="Gene3D" id="2.60.98.10">
    <property type="entry name" value="Tick-borne Encephalitis virus Glycoprotein, domain 1"/>
    <property type="match status" value="1"/>
</dbReference>
<dbReference type="Gene3D" id="2.40.10.10">
    <property type="entry name" value="Trypsin-like serine proteases"/>
    <property type="match status" value="1"/>
</dbReference>
<dbReference type="Gene3D" id="3.40.50.150">
    <property type="entry name" value="Vaccinia Virus protein VP39"/>
    <property type="match status" value="1"/>
</dbReference>
<dbReference type="Gene3D" id="3.30.67.10">
    <property type="entry name" value="Viral Envelope Glycoprotein, domain 2"/>
    <property type="match status" value="1"/>
</dbReference>
<dbReference type="Gene3D" id="3.30.387.10">
    <property type="entry name" value="Viral Envelope Glycoprotein, domain 3"/>
    <property type="match status" value="1"/>
</dbReference>
<dbReference type="InterPro" id="IPR043502">
    <property type="entry name" value="DNA/RNA_pol_sf"/>
</dbReference>
<dbReference type="InterPro" id="IPR000069">
    <property type="entry name" value="Env_glycoprot_M_flavivir"/>
</dbReference>
<dbReference type="InterPro" id="IPR038302">
    <property type="entry name" value="Env_glycoprot_M_sf_flavivir"/>
</dbReference>
<dbReference type="InterPro" id="IPR013755">
    <property type="entry name" value="Flav_gly_cen_dom_subdom1"/>
</dbReference>
<dbReference type="InterPro" id="IPR001122">
    <property type="entry name" value="Flavi_capsidC"/>
</dbReference>
<dbReference type="InterPro" id="IPR037172">
    <property type="entry name" value="Flavi_capsidC_sf"/>
</dbReference>
<dbReference type="InterPro" id="IPR011492">
    <property type="entry name" value="Flavi_DEAD"/>
</dbReference>
<dbReference type="InterPro" id="IPR027287">
    <property type="entry name" value="Flavi_E_Ig-like"/>
</dbReference>
<dbReference type="InterPro" id="IPR026470">
    <property type="entry name" value="Flavi_E_Stem/Anchor_dom"/>
</dbReference>
<dbReference type="InterPro" id="IPR038345">
    <property type="entry name" value="Flavi_E_Stem/Anchor_dom_sf"/>
</dbReference>
<dbReference type="InterPro" id="IPR011998">
    <property type="entry name" value="Flavi_Glycoprot_E_cen/dimer"/>
</dbReference>
<dbReference type="InterPro" id="IPR001157">
    <property type="entry name" value="Flavi_NS1"/>
</dbReference>
<dbReference type="InterPro" id="IPR000752">
    <property type="entry name" value="Flavi_NS2A"/>
</dbReference>
<dbReference type="InterPro" id="IPR000487">
    <property type="entry name" value="Flavi_NS2B"/>
</dbReference>
<dbReference type="InterPro" id="IPR001850">
    <property type="entry name" value="Flavi_NS3_S7"/>
</dbReference>
<dbReference type="InterPro" id="IPR000404">
    <property type="entry name" value="Flavi_NS4A"/>
</dbReference>
<dbReference type="InterPro" id="IPR001528">
    <property type="entry name" value="Flavi_NS4B"/>
</dbReference>
<dbReference type="InterPro" id="IPR046811">
    <property type="entry name" value="Flavi_NS5_thumb"/>
</dbReference>
<dbReference type="InterPro" id="IPR002535">
    <property type="entry name" value="Flavi_propep"/>
</dbReference>
<dbReference type="InterPro" id="IPR038688">
    <property type="entry name" value="Flavi_propep_sf"/>
</dbReference>
<dbReference type="InterPro" id="IPR047530">
    <property type="entry name" value="Flavi_RdRp"/>
</dbReference>
<dbReference type="InterPro" id="IPR000208">
    <property type="entry name" value="Flavi_RdRp_fingers/palm"/>
</dbReference>
<dbReference type="InterPro" id="IPR000336">
    <property type="entry name" value="Flavivir/Alphavir_Ig-like_sf"/>
</dbReference>
<dbReference type="InterPro" id="IPR014412">
    <property type="entry name" value="Gen_Poly_FLV"/>
</dbReference>
<dbReference type="InterPro" id="IPR036253">
    <property type="entry name" value="Glycoprot_cen/dimer_sf"/>
</dbReference>
<dbReference type="InterPro" id="IPR038055">
    <property type="entry name" value="Glycoprot_E_dimer_dom"/>
</dbReference>
<dbReference type="InterPro" id="IPR013756">
    <property type="entry name" value="GlyE_cen_dom_subdom2"/>
</dbReference>
<dbReference type="InterPro" id="IPR014001">
    <property type="entry name" value="Helicase_ATP-bd"/>
</dbReference>
<dbReference type="InterPro" id="IPR001650">
    <property type="entry name" value="Helicase_C-like"/>
</dbReference>
<dbReference type="InterPro" id="IPR014756">
    <property type="entry name" value="Ig_E-set"/>
</dbReference>
<dbReference type="InterPro" id="IPR026490">
    <property type="entry name" value="mRNA_cap_0/1_MeTrfase"/>
</dbReference>
<dbReference type="InterPro" id="IPR049486">
    <property type="entry name" value="NS3-hel_C_flaviviridae"/>
</dbReference>
<dbReference type="InterPro" id="IPR027417">
    <property type="entry name" value="P-loop_NTPase"/>
</dbReference>
<dbReference type="InterPro" id="IPR009003">
    <property type="entry name" value="Peptidase_S1_PA"/>
</dbReference>
<dbReference type="InterPro" id="IPR043504">
    <property type="entry name" value="Peptidase_S1_PA_chymotrypsin"/>
</dbReference>
<dbReference type="InterPro" id="IPR007094">
    <property type="entry name" value="RNA-dir_pol_PSvirus"/>
</dbReference>
<dbReference type="InterPro" id="IPR002877">
    <property type="entry name" value="RNA_MeTrfase_FtsJ_dom"/>
</dbReference>
<dbReference type="InterPro" id="IPR029063">
    <property type="entry name" value="SAM-dependent_MTases_sf"/>
</dbReference>
<dbReference type="NCBIfam" id="TIGR04240">
    <property type="entry name" value="flavi_E_stem"/>
    <property type="match status" value="1"/>
</dbReference>
<dbReference type="Pfam" id="PF20907">
    <property type="entry name" value="Flav_NS3-hel_C"/>
    <property type="match status" value="1"/>
</dbReference>
<dbReference type="Pfam" id="PF01003">
    <property type="entry name" value="Flavi_capsid"/>
    <property type="match status" value="1"/>
</dbReference>
<dbReference type="Pfam" id="PF07652">
    <property type="entry name" value="Flavi_DEAD"/>
    <property type="match status" value="1"/>
</dbReference>
<dbReference type="Pfam" id="PF21659">
    <property type="entry name" value="Flavi_E_stem"/>
    <property type="match status" value="1"/>
</dbReference>
<dbReference type="Pfam" id="PF02832">
    <property type="entry name" value="Flavi_glycop_C"/>
    <property type="match status" value="1"/>
</dbReference>
<dbReference type="Pfam" id="PF00869">
    <property type="entry name" value="Flavi_glycoprot"/>
    <property type="match status" value="1"/>
</dbReference>
<dbReference type="Pfam" id="PF01004">
    <property type="entry name" value="Flavi_M"/>
    <property type="match status" value="1"/>
</dbReference>
<dbReference type="Pfam" id="PF00948">
    <property type="entry name" value="Flavi_NS1"/>
    <property type="match status" value="1"/>
</dbReference>
<dbReference type="Pfam" id="PF01005">
    <property type="entry name" value="Flavi_NS2A"/>
    <property type="match status" value="1"/>
</dbReference>
<dbReference type="Pfam" id="PF01002">
    <property type="entry name" value="Flavi_NS2B"/>
    <property type="match status" value="1"/>
</dbReference>
<dbReference type="Pfam" id="PF01350">
    <property type="entry name" value="Flavi_NS4A"/>
    <property type="match status" value="1"/>
</dbReference>
<dbReference type="Pfam" id="PF01349">
    <property type="entry name" value="Flavi_NS4B"/>
    <property type="match status" value="1"/>
</dbReference>
<dbReference type="Pfam" id="PF00972">
    <property type="entry name" value="Flavi_NS5"/>
    <property type="match status" value="1"/>
</dbReference>
<dbReference type="Pfam" id="PF20483">
    <property type="entry name" value="Flavi_NS5_thumb"/>
    <property type="match status" value="1"/>
</dbReference>
<dbReference type="Pfam" id="PF01570">
    <property type="entry name" value="Flavi_propep"/>
    <property type="match status" value="1"/>
</dbReference>
<dbReference type="Pfam" id="PF01728">
    <property type="entry name" value="FtsJ"/>
    <property type="match status" value="1"/>
</dbReference>
<dbReference type="Pfam" id="PF00949">
    <property type="entry name" value="Peptidase_S7"/>
    <property type="match status" value="1"/>
</dbReference>
<dbReference type="PIRSF" id="PIRSF003817">
    <property type="entry name" value="Gen_Poly_FLV"/>
    <property type="match status" value="1"/>
</dbReference>
<dbReference type="SMART" id="SM00487">
    <property type="entry name" value="DEXDc"/>
    <property type="match status" value="1"/>
</dbReference>
<dbReference type="SMART" id="SM00490">
    <property type="entry name" value="HELICc"/>
    <property type="match status" value="1"/>
</dbReference>
<dbReference type="SUPFAM" id="SSF56672">
    <property type="entry name" value="DNA/RNA polymerases"/>
    <property type="match status" value="1"/>
</dbReference>
<dbReference type="SUPFAM" id="SSF81296">
    <property type="entry name" value="E set domains"/>
    <property type="match status" value="1"/>
</dbReference>
<dbReference type="SUPFAM" id="SSF101257">
    <property type="entry name" value="Flavivirus capsid protein C"/>
    <property type="match status" value="1"/>
</dbReference>
<dbReference type="SUPFAM" id="SSF52540">
    <property type="entry name" value="P-loop containing nucleoside triphosphate hydrolases"/>
    <property type="match status" value="2"/>
</dbReference>
<dbReference type="SUPFAM" id="SSF53335">
    <property type="entry name" value="S-adenosyl-L-methionine-dependent methyltransferases"/>
    <property type="match status" value="1"/>
</dbReference>
<dbReference type="SUPFAM" id="SSF50494">
    <property type="entry name" value="Trypsin-like serine proteases"/>
    <property type="match status" value="1"/>
</dbReference>
<dbReference type="SUPFAM" id="SSF56983">
    <property type="entry name" value="Viral glycoprotein, central and dimerisation domains"/>
    <property type="match status" value="1"/>
</dbReference>
<dbReference type="PROSITE" id="PS51527">
    <property type="entry name" value="FLAVIVIRUS_NS2B"/>
    <property type="match status" value="1"/>
</dbReference>
<dbReference type="PROSITE" id="PS51528">
    <property type="entry name" value="FLAVIVIRUS_NS3PRO"/>
    <property type="match status" value="1"/>
</dbReference>
<dbReference type="PROSITE" id="PS51192">
    <property type="entry name" value="HELICASE_ATP_BIND_1"/>
    <property type="match status" value="1"/>
</dbReference>
<dbReference type="PROSITE" id="PS51194">
    <property type="entry name" value="HELICASE_CTER"/>
    <property type="match status" value="1"/>
</dbReference>
<dbReference type="PROSITE" id="PS50507">
    <property type="entry name" value="RDRP_SSRNA_POS"/>
    <property type="match status" value="1"/>
</dbReference>
<dbReference type="PROSITE" id="PS51591">
    <property type="entry name" value="RNA_CAP01_NS5_MT"/>
    <property type="match status" value="1"/>
</dbReference>
<sequence>MNNQRKKTARPSFNMLKRARNRVSTGSQLAKRFSKGLLSGQGPMKLVMAFIAFLRFLAIPPTAGILARWGSFKKNGAIKVLRGFKKEISNMLNIMNRRKRSVTMLLMLLPTALAFHLTTRGGEPHMIVSKQEREKSLLFKTSVGVNMCTLIAMDLGELCEDTMTYKCPRITEAEPDDVDCWCNATDTWVTYGTCSQTGEHRRDKRSVALAPHVGLGLETRTETWMSSEGAWKQIQRVETWALRHPGFTVIALFLAHAIGTSITQKGIIFILLMLVTPSMAMRCVGIGSRDFVEGLSGATWVDVVLEHGSCVTTMAKDKPTLDIELLKTEVTNPAVLRKLCIEAKISNTTTDSRCPTQGEATLVEEQDANFVCRRTFVDRGWGNGCGLFGKGSLLTCAKFKCVTKLEGKIVQYENLKYSVIVTVHTGDQHQVGNETTEHGTIATITPQAPTSEIQLTDYGALTLDCSPRTGLDFNEMVLLTMKEKSWLVHKQWFLDLPLPWTSGASTSQETWNRQDLLVTFKTAHAKKQEVVVLGSQEGAMHTALTGATEIQTSGTTTIFAGHLKCRLKMDKLTLKGMSYVMCTGSFKLEKEVAETQHGTVLVQVKYEGTDAPCKIPFSTQDEKGVTQNRLITANPIVTDKEKPVNIETEPPFGESYIVVGAGEKALKQCWFKKGSSIGKMFEATARGARRMAILGDTAWDFGSIGGVFTSVGKLVHQVFGTAYGVLFSGVSWTMKIGIGILLTWLGLNSRSTSLSMTCIAVGMVTLYLGVMVQADSGCVINWKGRELKCGSGIFVTNEVHTWTEQYKFQADSPKRLSAAIGKAWEEGVCGIRSATRLENIMWKQISNELNHILLENDMKFTVVVGDVVGILAQGKKMIRPQPMEHKYSWKSWGKAKIIGADIQNTTFIIDGPDTPECPDDQRAWNIWEVEDYGFGIFTTNIWLKLRDSYTQMCDHRLMSAAIKDSKAVHADMGYWIESEKNETWKLARASFIEVKTCVWPKSHTLWSNGVLESEMIIPKIYGGPISQHNYRPGYFTQTAGPWHLGKLELDFDLCEGTTVVVDEHCGNRGPSLRTTTVTGKIIHEWCCRSCTLPPLRFKGEDGCWYGMEIRPVKEKEENLVKSMVSAGSGEVDSFSLGLLCISIMIEEVMRSRWSRKMLMTGTLAVFLLLIMGQLTWNDLIRLCIMVGANASDRMGMGTTYLALMATFKMRPMFAVGLLFRRLTSREVLLLTIGLSLVASVELPNSLEELGDGLAMGIMILKLLTDFQSHQLWATLLSLTFVKTTFSLHYAWKTMAMVLSIVSLFPLCLSTTSQKTTWLPVLLGSLGCKPLTMFLIAENKIWGRKSWPLNEGIMAVGIVSILLSSLLKNDVPLAGPLIAGGMLIACYVISGSSADLSLEKAAEVSWEEEAEHSGASHNILVEVQDDGTMKIKDEERDDTLTILLKATLLAVSGVYPLSIPATLFVWYFWQKKKQRSGVLWDTPSPPEVERAVLDDGIYRIMQRGLLGRSQVGVGVFQDGVFHTMWHVTRGAVLMYQGKRLEPSWASVKKDLISYGGGWRFQGSWNTGEEVQVIAVEPGKNPKNVQTAPGTFKTPEGEVGAIALDFKPGTSGSPIVNREGKIVGLYGNGVVTTSGTYVSAIAQAKASQEGPLPEIEDEVFRKRNLTIMDLHPGSGKTRRYLPAIVREAIRRNVRTLILAPTRVVASEMAEALKGMPIRYQTTAVKSEHTGKEIVDLMCHATFTMRLLSPVRVPNYNMIIMDEAHFTDPASIARRGYISTRVGMGEAAAIFMTATPPGSVEAFPQSNAVIQDEERDIPERSWNSGYEWITDFPGKTVWFVPSIKSGNDIANCLRKNGKRVIQLSRKTFDTEYQKTKNNDWDYVVTTDISEMGANFRADRVIDPRRCLKPVILKDGPERVILAGPMPVTVASAAQRRGRIGRNQNKEGDQYVYMGQPLNNDEDHAHWTEAKMLLDNINTPEGIIPALFEPEREKSAAIDGEYRLRGEARKTFVELMRRGDLPVWLSYKVASEGFQYSDRRWCFDGERNNQVLEENMDVEMWTKEGERKKLRPRWLDARTYSDPLALREFKEFAAGRRSVSGDLILEIGKLPQHLTQRAQNALDNLVMLHNSEQGGRAYRHAMEELPDTIETLMLLALIAVLTGGVTLFFLSGKGLGKTSIGLLCVMASSVLLWMASVEPHWIAASIILEFFLMVLLIPEPDRQRTPQDNQLAYVVIGLLFMILTVAANEMGLLETTKKDLGIGHVAAENHHHATMLDVDLRPASAWTLYAVATTVITPMMRHTIENTTANISLTAIANQAAILMGLDKGWPISKMDIGVPLLALGCYSQVNPLTLTAAVLMLVAHYAIIGPGLQAKATREAQKRTAAGIMKNPTVDGIVAIDLDPVVYDAKFEKQLGQIMLLILCTSQILLMRTTWALCESITLATGPLTTLWEGSPGKFWNTTIAVSMANIFRGSYLAGAGLAFSLMKSLGGGRRGTGAKGKHWERNGKDRLNQLSKSEFNTYKRSGIMEVDRSEAKEGLKRGETTKHAVSRGTAKLRWFVERNLVKPEGKVIDLGCGRGGWSYYCAGLKKVTEVKGYTKGGPGHEEPIPMATYGWNLVKLYSGKDVFFTPPEKCDTLLCDIGESSPNPTIEEGRTLRVLKMVEPWLRGNQFCIKILNPYMPSVVETLEQMQRKHGGMLVRNPLSRNSTHEMYWVSCGTGNIVSAVNMTSRMLLNRFTMAHRKPTYERDVDLGAGTRHVAVEPEVANLDIIGQRIENIKHEHKSTWHYDEDNPYKTWAYHGSYEVKPSGSASSMVNGVVKLLTKPWDAIPMVTQIAMTDTTPFGQQRVFKEKVDTRTPKAKRGTAQIMEVTARWLWGFLSRNKKPRICTREEFTRKVRSNAAIGAVFVDENQWNSAKEAVEDERFWDLVHRERELHKQGKCATCVYNMMGKREKKLGEFGKAKGSRAIWYMWLGARFLEFEALGFMNEDHWFSRENSLSGVEGEGLHKLGYILRDISKIPGGNMYADDTAGWDTRITEDDLQNEAKITDIMEPEHALLATSIFKLTYQNKVVRVQRPAKNGTVMDVISRRDQRGSGQVGTYGLNTFTNMEAQLIRQMESEGIFSPSELETPNLAERVLDWLEKYGVERLKRMAISGDDCVVKPIDDRFATALTALNDMGKVRKDIPQWEPSKGWNDWQQVPFCSHHFHQLIMKDGREIVVPCRNQDELVGRARVSQGAGWSLRETACLGKSYAQMWQLMYFHRRDLRLAANAICSAVPVDWVPTSRTTWSIHAHHQWMTTEDMLSVWNRVWIEENPWMEDKTHVSSWEDVPYLGKREDQWCGSLIGLTARATWATNIQVAINQVRRLIGNENYLDYMTSMKRFKNESDPEGALW</sequence>
<organismHost>
    <name type="scientific">Aedes aegypti</name>
    <name type="common">Yellowfever mosquito</name>
    <name type="synonym">Culex aegypti</name>
    <dbReference type="NCBI Taxonomy" id="7159"/>
</organismHost>
<organismHost>
    <name type="scientific">Aedes albopictus</name>
    <name type="common">Asian tiger mosquito</name>
    <name type="synonym">Stegomyia albopicta</name>
    <dbReference type="NCBI Taxonomy" id="7160"/>
</organismHost>
<organismHost>
    <name type="scientific">Homo sapiens</name>
    <name type="common">Human</name>
    <dbReference type="NCBI Taxonomy" id="9606"/>
</organismHost>
<organism>
    <name type="scientific">Dengue virus type 1 (strain Singapore/S275/1990)</name>
    <name type="common">DENV-1</name>
    <dbReference type="NCBI Taxonomy" id="33741"/>
    <lineage>
        <taxon>Viruses</taxon>
        <taxon>Riboviria</taxon>
        <taxon>Orthornavirae</taxon>
        <taxon>Kitrinoviricota</taxon>
        <taxon>Flasuviricetes</taxon>
        <taxon>Amarillovirales</taxon>
        <taxon>Flaviviridae</taxon>
        <taxon>Orthoflavivirus</taxon>
        <taxon>Orthoflavivirus denguei</taxon>
        <taxon>Dengue virus</taxon>
    </lineage>
</organism>
<comment type="function">
    <molecule>Capsid protein C</molecule>
    <text evidence="5">Plays a role in virus budding by binding to the cell membrane and gathering the viral RNA into a nucleocapsid that forms the core of a mature virus particle. During virus entry, may induce genome penetration into the host cytoplasm after hemifusion induced by the surface proteins. Can migrate to the cell nucleus where it modulates host functions. Overcomes the anti-viral effects of host EXOC1 by sequestering and degrading the latter through the proteasome degradation pathway.</text>
</comment>
<comment type="function">
    <molecule>Capsid protein C</molecule>
    <text evidence="1">Inhibits RNA silencing by interfering with host Dicer.</text>
</comment>
<comment type="function">
    <molecule>Peptide pr</molecule>
    <text evidence="5">Prevents premature fusion activity of envelope proteins in trans-Golgi by binding to envelope protein E at pH6.0. After virion release in extracellular space, gets dissociated from E dimers.</text>
</comment>
<comment type="function">
    <molecule>Protein prM</molecule>
    <text evidence="5">Acts as a chaperone for envelope protein E during intracellular virion assembly by masking and inactivating envelope protein E fusion peptide. prM is the only viral peptide matured by host furin in the trans-Golgi network probably to avoid catastrophic activation of the viral fusion activity in acidic Golgi compartment prior to virion release. prM-E cleavage is inefficient, and many virions are only partially matured. These uncleaved prM would play a role in immune evasion.</text>
</comment>
<comment type="function">
    <molecule>Small envelope protein M</molecule>
    <text evidence="5">May play a role in virus budding. Exerts cytotoxic effects by activating a mitochondrial apoptotic pathway through M ectodomain. May display a viroporin activity.</text>
</comment>
<comment type="function">
    <molecule>Envelope protein E</molecule>
    <text evidence="5">Binds to host cell surface receptor and mediates fusion between viral and cellular membranes. Envelope protein is synthesized in the endoplasmic reticulum in the form of heterodimer with protein prM. They play a role in virion budding in the ER, and the newly formed immature particle is covered with 60 spikes composed of heterodimer between precursor prM and envelope protein E. The virion is transported to the Golgi apparatus where the low pH causes dissociation of PrM-E heterodimers and formation of E homodimers. prM-E cleavage is inefficient, and many virions are only partially matured. These uncleaved prM would play a role in immune evasion.</text>
</comment>
<comment type="function">
    <molecule>Non-structural protein 1</molecule>
    <text evidence="10">Involved in immune evasion, pathogenesis and viral replication. Once cleaved off the polyprotein, is targeted to three destinations: the viral replication cycle, the plasma membrane and the extracellular compartment. Essential for viral replication. Required for formation of the replication complex and recruitment of other non-structural proteins to the ER-derived membrane structures. Excreted as a hexameric lipoparticle that plays a role against host immune response. Antagonizing the complement function. Binds to the host macrophages and dendritic cells. Inhibits signal transduction originating from Toll-like receptor 3 (TLR3).</text>
</comment>
<comment type="function">
    <molecule>Non-structural protein 1</molecule>
    <text evidence="5">Disrupts the host endothelial glycocalyx layer of host pulmonary microvascular endothelial cells, inducing degradation of sialic acid and shedding of heparan sulfate proteoglycans. NS1 induces expression of sialidases, heparanase, and activates cathepsin L, which activates heparanase via enzymatic cleavage. These effects are probably linked to the endothelial hyperpermeability observed in severe dengue disease.</text>
</comment>
<comment type="function">
    <molecule>Non-structural protein 2A</molecule>
    <text evidence="5">Component of the viral RNA replication complex that functions in virion assembly and antagonizes the host immune response.</text>
</comment>
<comment type="function">
    <molecule>Serine protease subunit NS2B</molecule>
    <text evidence="5 16">Required cofactor for the serine protease function of NS3. May have membrane-destabilizing activity and form viroporins (By similarity).</text>
</comment>
<comment type="function">
    <molecule>Serine protease NS3</molecule>
    <text evidence="17">Displays three enzymatic activities: serine protease, NTPase and RNA c. NS3 serine protease, in association with NS2B, performs its autocleavage and cleaves the polyprotein at dibasic sites in the cytoplasm: C-prM, NS2A-NS2B, NS2B-NS3, NS3-NS4A, NS4A-2K and NS4B-NS5. NS3 RNA helicase binds RNA and unwinds dsRNA in the 3' to 5' direction.</text>
</comment>
<comment type="function">
    <molecule>Non-structural protein 4A</molecule>
    <text evidence="5 7 10">Regulates the ATPase activity of the NS3 helicase activity. NS4A allows NS3 helicase to conserve energy during unwinding. Plays a role in the inhibition of the host innate immune response. Interacts with host MAVS and thereby prevents the interaction between RIGI and MAVS. In turn, IFN-beta production is impaired. Interacts with host AUP1 which mediates induction of lipophagy in host cells and facilitates production of virus progeny particles (By similarity).</text>
</comment>
<comment type="function">
    <molecule>Peptide 2k</molecule>
    <text evidence="5">Functions as a signal peptide for NS4B and is required for the interferon antagonism activity of the latter.</text>
</comment>
<comment type="function">
    <molecule>Non-structural protein 4B</molecule>
    <text evidence="10">Induces the formation of ER-derived membrane vesicles where the viral replication takes place. Inhibits interferon (IFN)-induced host STAT1 phosphorylation and nuclear translocation, thereby preventing the establishment of cellular antiviral state by blocking the IFN-alpha/beta pathway.</text>
</comment>
<comment type="function">
    <molecule>RNA-directed RNA polymerase NS5</molecule>
    <text evidence="5">Replicates the viral (+) and (-) RNA genome, and performs the capping of genomes in the cytoplasm. NS5 methylates viral RNA cap at guanine N-7 and ribose 2'-O positions. Besides its role in RNA genome replication, also prevents the establishment of cellular antiviral state by blocking the interferon-alpha/beta (IFN-alpha/beta) signaling pathway. Inhibits host TYK2 and STAT2 phosphorylation, thereby preventing activation of JAK-STAT signaling pathway.</text>
</comment>
<comment type="catalytic activity">
    <reaction>
        <text>Selective hydrolysis of -Xaa-Xaa-|-Yaa- bonds in which each of the Xaa can be either Arg or Lys and Yaa can be either Ser or Ala.</text>
        <dbReference type="EC" id="3.4.21.91"/>
    </reaction>
</comment>
<comment type="catalytic activity">
    <reaction evidence="13">
        <text>RNA(n) + a ribonucleoside 5'-triphosphate = RNA(n+1) + diphosphate</text>
        <dbReference type="Rhea" id="RHEA:21248"/>
        <dbReference type="Rhea" id="RHEA-COMP:14527"/>
        <dbReference type="Rhea" id="RHEA-COMP:17342"/>
        <dbReference type="ChEBI" id="CHEBI:33019"/>
        <dbReference type="ChEBI" id="CHEBI:61557"/>
        <dbReference type="ChEBI" id="CHEBI:140395"/>
        <dbReference type="EC" id="2.7.7.48"/>
    </reaction>
</comment>
<comment type="catalytic activity">
    <reaction>
        <text>a ribonucleoside 5'-triphosphate + H2O = a ribonucleoside 5'-diphosphate + phosphate + H(+)</text>
        <dbReference type="Rhea" id="RHEA:23680"/>
        <dbReference type="ChEBI" id="CHEBI:15377"/>
        <dbReference type="ChEBI" id="CHEBI:15378"/>
        <dbReference type="ChEBI" id="CHEBI:43474"/>
        <dbReference type="ChEBI" id="CHEBI:57930"/>
        <dbReference type="ChEBI" id="CHEBI:61557"/>
        <dbReference type="EC" id="3.6.1.15"/>
    </reaction>
</comment>
<comment type="catalytic activity">
    <reaction>
        <text>ATP + H2O = ADP + phosphate + H(+)</text>
        <dbReference type="Rhea" id="RHEA:13065"/>
        <dbReference type="ChEBI" id="CHEBI:15377"/>
        <dbReference type="ChEBI" id="CHEBI:15378"/>
        <dbReference type="ChEBI" id="CHEBI:30616"/>
        <dbReference type="ChEBI" id="CHEBI:43474"/>
        <dbReference type="ChEBI" id="CHEBI:456216"/>
        <dbReference type="EC" id="3.6.4.13"/>
    </reaction>
</comment>
<comment type="catalytic activity">
    <reaction evidence="18">
        <text>a 5'-end (5'-triphosphoguanosine)-ribonucleoside in mRNA + S-adenosyl-L-methionine = a 5'-end (N(7)-methyl 5'-triphosphoguanosine)-ribonucleoside in mRNA + S-adenosyl-L-homocysteine</text>
        <dbReference type="Rhea" id="RHEA:67008"/>
        <dbReference type="Rhea" id="RHEA-COMP:17166"/>
        <dbReference type="Rhea" id="RHEA-COMP:17167"/>
        <dbReference type="ChEBI" id="CHEBI:57856"/>
        <dbReference type="ChEBI" id="CHEBI:59789"/>
        <dbReference type="ChEBI" id="CHEBI:156461"/>
        <dbReference type="ChEBI" id="CHEBI:167617"/>
        <dbReference type="EC" id="2.1.1.56"/>
    </reaction>
</comment>
<comment type="catalytic activity">
    <reaction evidence="18">
        <text>a 5'-end (N(7)-methyl 5'-triphosphoguanosine)-ribonucleoside in mRNA + S-adenosyl-L-methionine = a 5'-end (N(7)-methyl 5'-triphosphoguanosine)-(2'-O-methyl-ribonucleoside) in mRNA + S-adenosyl-L-homocysteine + H(+)</text>
        <dbReference type="Rhea" id="RHEA:67020"/>
        <dbReference type="Rhea" id="RHEA-COMP:17167"/>
        <dbReference type="Rhea" id="RHEA-COMP:17168"/>
        <dbReference type="ChEBI" id="CHEBI:15378"/>
        <dbReference type="ChEBI" id="CHEBI:57856"/>
        <dbReference type="ChEBI" id="CHEBI:59789"/>
        <dbReference type="ChEBI" id="CHEBI:156461"/>
        <dbReference type="ChEBI" id="CHEBI:167609"/>
        <dbReference type="EC" id="2.1.1.57"/>
    </reaction>
</comment>
<comment type="subunit">
    <molecule>Capsid protein C</molecule>
    <text evidence="5">Homodimer. Interacts (via N-terminus) with host EXOC1 (via C-terminus); this interaction results in EXOC1 degradation through the proteasome degradation pathway.</text>
</comment>
<comment type="subunit">
    <molecule>Protein prM</molecule>
    <text evidence="5">Forms heterodimers with envelope protein E in the endoplasmic reticulum and Golgi.</text>
</comment>
<comment type="subunit">
    <molecule>Envelope protein E</molecule>
    <text evidence="5">Homodimer; in the endoplasmic reticulum and Golgi. Interacts with protein prM. Interacts with non-structural protein 1.</text>
</comment>
<comment type="subunit">
    <molecule>Non-structural protein 1</molecule>
    <text evidence="5">Homodimer; Homohexamer when secreted. Interacts with envelope protein E.</text>
</comment>
<comment type="subunit">
    <molecule>Non-structural protein 2A</molecule>
    <text evidence="5">Interacts (via N-terminus) with serine protease NS3.</text>
</comment>
<comment type="subunit">
    <molecule>Serine protease subunit NS2B</molecule>
    <text evidence="5">Forms a heterodimer with serine protease NS3. May form homooligomers.</text>
</comment>
<comment type="subunit">
    <molecule>Serine protease NS3</molecule>
    <text evidence="5">Forms a heterodimer with NS2B. Interacts with NS4B. Interacts with unphosphorylated RNA-directed RNA polymerase NS5; this interaction stimulates RNA-directed RNA polymerase NS5 guanylyltransferase activity. Interacts with host SHFL.</text>
</comment>
<comment type="subunit">
    <molecule>Non-structural protein 4A</molecule>
    <text evidence="5 7">Interacts with host MAVS; this interaction inhibits the synthesis of IFN-beta. Interacts with host SHFL. Interacts with host AUP1; the interaction occurs in the presence of Dengue virus NS4B and induces lipophagy which facilitates production of virus progeny particles (By similarity).</text>
</comment>
<comment type="subunit">
    <molecule>Non-structural protein 4B</molecule>
    <text evidence="5">Interacts with serine protease NS3.</text>
</comment>
<comment type="subunit">
    <molecule>RNA-directed RNA polymerase NS5</molecule>
    <text evidence="5">Homodimer. Interacts with host STAT2; this interaction inhibits the phosphorylation of the latter, and, when all viral proteins are present (polyprotein), targets STAT2 for degradation. Interacts with serine protease NS3.</text>
</comment>
<comment type="subcellular location">
    <molecule>Capsid protein C</molecule>
    <subcellularLocation>
        <location evidence="5">Virion</location>
    </subcellularLocation>
    <subcellularLocation>
        <location evidence="5">Host nucleus</location>
    </subcellularLocation>
    <subcellularLocation>
        <location evidence="5">Host cytoplasm</location>
    </subcellularLocation>
    <subcellularLocation>
        <location evidence="5">Host cytoplasm</location>
        <location evidence="5">Host perinuclear region</location>
    </subcellularLocation>
</comment>
<comment type="subcellular location">
    <molecule>Peptide pr</molecule>
    <subcellularLocation>
        <location evidence="5">Secreted</location>
    </subcellularLocation>
</comment>
<comment type="subcellular location">
    <molecule>Small envelope protein M</molecule>
    <subcellularLocation>
        <location evidence="5">Virion membrane</location>
        <topology evidence="11">Multi-pass membrane protein</topology>
    </subcellularLocation>
    <subcellularLocation>
        <location evidence="5">Host endoplasmic reticulum membrane</location>
        <topology evidence="11">Multi-pass membrane protein</topology>
    </subcellularLocation>
</comment>
<comment type="subcellular location">
    <molecule>Envelope protein E</molecule>
    <subcellularLocation>
        <location evidence="5">Virion membrane</location>
        <topology evidence="11">Multi-pass membrane protein</topology>
    </subcellularLocation>
    <subcellularLocation>
        <location evidence="5">Host endoplasmic reticulum membrane</location>
        <topology evidence="11">Multi-pass membrane protein</topology>
    </subcellularLocation>
</comment>
<comment type="subcellular location">
    <molecule>Non-structural protein 1</molecule>
    <subcellularLocation>
        <location evidence="5">Secreted</location>
    </subcellularLocation>
    <subcellularLocation>
        <location>Host endoplasmic reticulum membrane</location>
        <topology>Peripheral membrane protein</topology>
        <orientation evidence="5">Lumenal side</orientation>
    </subcellularLocation>
    <text evidence="10">Located in RE-derived vesicles hosting the replication complex.</text>
</comment>
<comment type="subcellular location">
    <molecule>Non-structural protein 2A</molecule>
    <subcellularLocation>
        <location evidence="5">Host endoplasmic reticulum membrane</location>
        <topology evidence="5">Multi-pass membrane protein</topology>
    </subcellularLocation>
</comment>
<comment type="subcellular location">
    <molecule>Serine protease subunit NS2B</molecule>
    <subcellularLocation>
        <location>Host endoplasmic reticulum membrane</location>
        <topology evidence="5">Multi-pass membrane protein</topology>
    </subcellularLocation>
</comment>
<comment type="subcellular location">
    <molecule>Serine protease NS3</molecule>
    <subcellularLocation>
        <location evidence="17">Host endoplasmic reticulum membrane</location>
        <topology evidence="17">Peripheral membrane protein</topology>
        <orientation evidence="17">Cytoplasmic side</orientation>
    </subcellularLocation>
    <text evidence="17">Remains non-covalently associated to serine protease subunit NS2B.</text>
</comment>
<comment type="subcellular location">
    <molecule>Non-structural protein 4A</molecule>
    <subcellularLocation>
        <location evidence="5">Host endoplasmic reticulum membrane</location>
        <topology evidence="5">Multi-pass membrane protein</topology>
    </subcellularLocation>
    <subcellularLocation>
        <location evidence="5">Host mitochondrion</location>
    </subcellularLocation>
    <text evidence="5">Located in RE-associated vesicles hosting the replication complex. Interacts with host MAVS in the mitochondrion-associated endoplasmic reticulum membranes.</text>
</comment>
<comment type="subcellular location">
    <molecule>Non-structural protein 4B</molecule>
    <subcellularLocation>
        <location evidence="5">Host endoplasmic reticulum membrane</location>
        <topology evidence="5">Multi-pass membrane protein</topology>
    </subcellularLocation>
    <text evidence="10">Located in RE-derived vesicles hosting the replication complex.</text>
</comment>
<comment type="subcellular location">
    <molecule>RNA-directed RNA polymerase NS5</molecule>
    <subcellularLocation>
        <location>Host endoplasmic reticulum membrane</location>
        <topology>Peripheral membrane protein</topology>
        <orientation>Cytoplasmic side</orientation>
    </subcellularLocation>
    <subcellularLocation>
        <location evidence="5">Host nucleus</location>
    </subcellularLocation>
    <text evidence="5">Located in RE-associated vesicles hosting the replication complex. NS5 protein is mainly localized in the nucleus rather than in ER vesicles, especially in the DENV 2, 3, 4 serotypes.</text>
</comment>
<comment type="domain">
    <text evidence="5">The transmembrane domains of the small envelope protein M and envelope protein E contain an endoplasmic reticulum retention signal.</text>
</comment>
<comment type="PTM">
    <molecule>Genome polyprotein</molecule>
    <text evidence="5">Specific enzymatic cleavages in vivo yield mature proteins. Cleavages in the lumen of endoplasmic reticulum are performed by host signal peptidase, whereas cleavages in the cytoplasmic side are performed by serine protease NS3. Signal cleavage at the 2K-4B site requires a prior NS3 protease-mediated cleavage at the 4A-2K site.</text>
</comment>
<comment type="PTM">
    <molecule>Protein prM</molecule>
    <text evidence="5">Cleaved in post-Golgi vesicles by a host furin, releasing the mature small envelope protein M, and peptide pr. This cleavage is incomplete as up to 30% of viral particles still carry uncleaved prM.</text>
</comment>
<comment type="PTM">
    <molecule>Envelope protein E</molecule>
    <text evidence="5">N-glycosylated.</text>
</comment>
<comment type="PTM">
    <molecule>Non-structural protein 1</molecule>
    <text evidence="5">N-glycosylated. The excreted form is glycosylated and this is required for efficient secretion of the protein from infected cells.</text>
</comment>
<comment type="PTM">
    <molecule>Serine protease NS3</molecule>
    <text evidence="8">Acetylated by host KAT5. Acetylation modulates NS3 RNA-binding and unwinding activities and plays an important positive role for viral replication.</text>
</comment>
<comment type="PTM">
    <molecule>RNA-directed RNA polymerase NS5</molecule>
    <text evidence="6">Sumoylation of RNA-directed RNA polymerase NS5 increases NS5 protein stability allowing proper viral RNA replication.</text>
</comment>
<comment type="PTM">
    <molecule>RNA-directed RNA polymerase NS5</molecule>
    <text evidence="5">Phosphorylated on serines residues. This phosphorylation may trigger NS5 nuclear localization.</text>
</comment>
<comment type="similarity">
    <text evidence="18">In the N-terminal section; belongs to the class I-like SAM-binding methyltransferase superfamily. mRNA cap 0-1 NS5-type methyltransferase family.</text>
</comment>
<proteinExistence type="evidence at protein level"/>